<sequence>MAKEDTIQMQGEILETLPNATFKVKLENDHIVLGHISGKMRMHYIRISPGDKVTVELTPYDLTRARIVFRAR</sequence>
<accession>A1KRJ4</accession>
<name>IF1_NEIMF</name>
<keyword id="KW-0963">Cytoplasm</keyword>
<keyword id="KW-0396">Initiation factor</keyword>
<keyword id="KW-0648">Protein biosynthesis</keyword>
<keyword id="KW-0694">RNA-binding</keyword>
<keyword id="KW-0699">rRNA-binding</keyword>
<protein>
    <recommendedName>
        <fullName evidence="1">Translation initiation factor IF-1</fullName>
    </recommendedName>
</protein>
<organism>
    <name type="scientific">Neisseria meningitidis serogroup C / serotype 2a (strain ATCC 700532 / DSM 15464 / FAM18)</name>
    <dbReference type="NCBI Taxonomy" id="272831"/>
    <lineage>
        <taxon>Bacteria</taxon>
        <taxon>Pseudomonadati</taxon>
        <taxon>Pseudomonadota</taxon>
        <taxon>Betaproteobacteria</taxon>
        <taxon>Neisseriales</taxon>
        <taxon>Neisseriaceae</taxon>
        <taxon>Neisseria</taxon>
    </lineage>
</organism>
<proteinExistence type="inferred from homology"/>
<evidence type="ECO:0000255" key="1">
    <source>
        <dbReference type="HAMAP-Rule" id="MF_00075"/>
    </source>
</evidence>
<reference key="1">
    <citation type="journal article" date="2007" name="PLoS Genet.">
        <title>Meningococcal genetic variation mechanisms viewed through comparative analysis of serogroup C strain FAM18.</title>
        <authorList>
            <person name="Bentley S.D."/>
            <person name="Vernikos G.S."/>
            <person name="Snyder L.A.S."/>
            <person name="Churcher C."/>
            <person name="Arrowsmith C."/>
            <person name="Chillingworth T."/>
            <person name="Cronin A."/>
            <person name="Davis P.H."/>
            <person name="Holroyd N.E."/>
            <person name="Jagels K."/>
            <person name="Maddison M."/>
            <person name="Moule S."/>
            <person name="Rabbinowitsch E."/>
            <person name="Sharp S."/>
            <person name="Unwin L."/>
            <person name="Whitehead S."/>
            <person name="Quail M.A."/>
            <person name="Achtman M."/>
            <person name="Barrell B.G."/>
            <person name="Saunders N.J."/>
            <person name="Parkhill J."/>
        </authorList>
    </citation>
    <scope>NUCLEOTIDE SEQUENCE [LARGE SCALE GENOMIC DNA]</scope>
    <source>
        <strain>ATCC 700532 / DSM 15464 / FAM18</strain>
    </source>
</reference>
<comment type="function">
    <text evidence="1">One of the essential components for the initiation of protein synthesis. Stabilizes the binding of IF-2 and IF-3 on the 30S subunit to which N-formylmethionyl-tRNA(fMet) subsequently binds. Helps modulate mRNA selection, yielding the 30S pre-initiation complex (PIC). Upon addition of the 50S ribosomal subunit IF-1, IF-2 and IF-3 are released leaving the mature 70S translation initiation complex.</text>
</comment>
<comment type="subunit">
    <text evidence="1">Component of the 30S ribosomal translation pre-initiation complex which assembles on the 30S ribosome in the order IF-2 and IF-3, IF-1 and N-formylmethionyl-tRNA(fMet); mRNA recruitment can occur at any time during PIC assembly.</text>
</comment>
<comment type="subcellular location">
    <subcellularLocation>
        <location evidence="1">Cytoplasm</location>
    </subcellularLocation>
</comment>
<comment type="similarity">
    <text evidence="1">Belongs to the IF-1 family.</text>
</comment>
<feature type="chain" id="PRO_0000338870" description="Translation initiation factor IF-1">
    <location>
        <begin position="1"/>
        <end position="72"/>
    </location>
</feature>
<feature type="domain" description="S1-like" evidence="1">
    <location>
        <begin position="1"/>
        <end position="72"/>
    </location>
</feature>
<gene>
    <name evidence="1" type="primary">infA</name>
    <name type="ordered locus">NMC0153</name>
</gene>
<dbReference type="EMBL" id="AM421808">
    <property type="protein sequence ID" value="CAM09472.1"/>
    <property type="molecule type" value="Genomic_DNA"/>
</dbReference>
<dbReference type="RefSeq" id="WP_002215452.1">
    <property type="nucleotide sequence ID" value="NC_008767.1"/>
</dbReference>
<dbReference type="SMR" id="A1KRJ4"/>
<dbReference type="GeneID" id="93387238"/>
<dbReference type="KEGG" id="nmc:NMC0153"/>
<dbReference type="HOGENOM" id="CLU_151267_1_0_4"/>
<dbReference type="Proteomes" id="UP000002286">
    <property type="component" value="Chromosome"/>
</dbReference>
<dbReference type="GO" id="GO:0005829">
    <property type="term" value="C:cytosol"/>
    <property type="evidence" value="ECO:0007669"/>
    <property type="project" value="TreeGrafter"/>
</dbReference>
<dbReference type="GO" id="GO:0043022">
    <property type="term" value="F:ribosome binding"/>
    <property type="evidence" value="ECO:0007669"/>
    <property type="project" value="UniProtKB-UniRule"/>
</dbReference>
<dbReference type="GO" id="GO:0019843">
    <property type="term" value="F:rRNA binding"/>
    <property type="evidence" value="ECO:0007669"/>
    <property type="project" value="UniProtKB-UniRule"/>
</dbReference>
<dbReference type="GO" id="GO:0003743">
    <property type="term" value="F:translation initiation factor activity"/>
    <property type="evidence" value="ECO:0007669"/>
    <property type="project" value="UniProtKB-UniRule"/>
</dbReference>
<dbReference type="CDD" id="cd04451">
    <property type="entry name" value="S1_IF1"/>
    <property type="match status" value="1"/>
</dbReference>
<dbReference type="FunFam" id="2.40.50.140:FF:000002">
    <property type="entry name" value="Translation initiation factor IF-1"/>
    <property type="match status" value="1"/>
</dbReference>
<dbReference type="Gene3D" id="2.40.50.140">
    <property type="entry name" value="Nucleic acid-binding proteins"/>
    <property type="match status" value="1"/>
</dbReference>
<dbReference type="HAMAP" id="MF_00075">
    <property type="entry name" value="IF_1"/>
    <property type="match status" value="1"/>
</dbReference>
<dbReference type="InterPro" id="IPR012340">
    <property type="entry name" value="NA-bd_OB-fold"/>
</dbReference>
<dbReference type="InterPro" id="IPR006196">
    <property type="entry name" value="RNA-binding_domain_S1_IF1"/>
</dbReference>
<dbReference type="InterPro" id="IPR004368">
    <property type="entry name" value="TIF_IF1"/>
</dbReference>
<dbReference type="NCBIfam" id="TIGR00008">
    <property type="entry name" value="infA"/>
    <property type="match status" value="1"/>
</dbReference>
<dbReference type="PANTHER" id="PTHR33370">
    <property type="entry name" value="TRANSLATION INITIATION FACTOR IF-1, CHLOROPLASTIC"/>
    <property type="match status" value="1"/>
</dbReference>
<dbReference type="PANTHER" id="PTHR33370:SF1">
    <property type="entry name" value="TRANSLATION INITIATION FACTOR IF-1, CHLOROPLASTIC"/>
    <property type="match status" value="1"/>
</dbReference>
<dbReference type="Pfam" id="PF01176">
    <property type="entry name" value="eIF-1a"/>
    <property type="match status" value="1"/>
</dbReference>
<dbReference type="SUPFAM" id="SSF50249">
    <property type="entry name" value="Nucleic acid-binding proteins"/>
    <property type="match status" value="1"/>
</dbReference>
<dbReference type="PROSITE" id="PS50832">
    <property type="entry name" value="S1_IF1_TYPE"/>
    <property type="match status" value="1"/>
</dbReference>